<accession>Q320Z7</accession>
<gene>
    <name evidence="1" type="primary">anmK</name>
    <name type="ordered locus">SBO_1494</name>
</gene>
<proteinExistence type="inferred from homology"/>
<name>ANMK_SHIBS</name>
<sequence>MKSGRFIGVMSGTSLDGVDVVLATIDEHRVAQLASLSWPIPVSLKQAVLDICQGQQLTLSQFGQLDTQLGRLFADAVNALLKEQNLQARDIVAIGCHGQTVWHEPTGVAPHTLQIGDNNQIVARTGITVVGDFRRRDIALGGQGAPLVPAFHHALLAHPTERRMVLNIGGIANLSLLIPGQLVGGYDTGPGNMLMDAWIWRQAGKPYDKDAEWARAGKVILPLLQNMLSDPYFSQPAPKSTGREYFNYGWLERHLRHFPGVDPRDVQATLAELTAVTISEQVLLSGGCERLMVCGGGSRNLLLMARLAALLPGTEVTTTDAVGISGDDMEALAFAWLAWRTLAGLPGNLPSVTGASQETVLGAIFPANP</sequence>
<reference key="1">
    <citation type="journal article" date="2005" name="Nucleic Acids Res.">
        <title>Genome dynamics and diversity of Shigella species, the etiologic agents of bacillary dysentery.</title>
        <authorList>
            <person name="Yang F."/>
            <person name="Yang J."/>
            <person name="Zhang X."/>
            <person name="Chen L."/>
            <person name="Jiang Y."/>
            <person name="Yan Y."/>
            <person name="Tang X."/>
            <person name="Wang J."/>
            <person name="Xiong Z."/>
            <person name="Dong J."/>
            <person name="Xue Y."/>
            <person name="Zhu Y."/>
            <person name="Xu X."/>
            <person name="Sun L."/>
            <person name="Chen S."/>
            <person name="Nie H."/>
            <person name="Peng J."/>
            <person name="Xu J."/>
            <person name="Wang Y."/>
            <person name="Yuan Z."/>
            <person name="Wen Y."/>
            <person name="Yao Z."/>
            <person name="Shen Y."/>
            <person name="Qiang B."/>
            <person name="Hou Y."/>
            <person name="Yu J."/>
            <person name="Jin Q."/>
        </authorList>
    </citation>
    <scope>NUCLEOTIDE SEQUENCE [LARGE SCALE GENOMIC DNA]</scope>
    <source>
        <strain>Sb227</strain>
    </source>
</reference>
<organism>
    <name type="scientific">Shigella boydii serotype 4 (strain Sb227)</name>
    <dbReference type="NCBI Taxonomy" id="300268"/>
    <lineage>
        <taxon>Bacteria</taxon>
        <taxon>Pseudomonadati</taxon>
        <taxon>Pseudomonadota</taxon>
        <taxon>Gammaproteobacteria</taxon>
        <taxon>Enterobacterales</taxon>
        <taxon>Enterobacteriaceae</taxon>
        <taxon>Shigella</taxon>
    </lineage>
</organism>
<evidence type="ECO:0000255" key="1">
    <source>
        <dbReference type="HAMAP-Rule" id="MF_01270"/>
    </source>
</evidence>
<comment type="function">
    <text evidence="1">Catalyzes the specific phosphorylation of 1,6-anhydro-N-acetylmuramic acid (anhMurNAc) with the simultaneous cleavage of the 1,6-anhydro ring, generating MurNAc-6-P. Is required for the utilization of anhMurNAc either imported from the medium or derived from its own cell wall murein, and thus plays a role in cell wall recycling.</text>
</comment>
<comment type="catalytic activity">
    <reaction evidence="1">
        <text>1,6-anhydro-N-acetyl-beta-muramate + ATP + H2O = N-acetyl-D-muramate 6-phosphate + ADP + H(+)</text>
        <dbReference type="Rhea" id="RHEA:24952"/>
        <dbReference type="ChEBI" id="CHEBI:15377"/>
        <dbReference type="ChEBI" id="CHEBI:15378"/>
        <dbReference type="ChEBI" id="CHEBI:30616"/>
        <dbReference type="ChEBI" id="CHEBI:58690"/>
        <dbReference type="ChEBI" id="CHEBI:58722"/>
        <dbReference type="ChEBI" id="CHEBI:456216"/>
        <dbReference type="EC" id="2.7.1.170"/>
    </reaction>
</comment>
<comment type="pathway">
    <text evidence="1">Amino-sugar metabolism; 1,6-anhydro-N-acetylmuramate degradation.</text>
</comment>
<comment type="pathway">
    <text evidence="1">Cell wall biogenesis; peptidoglycan recycling.</text>
</comment>
<comment type="similarity">
    <text evidence="1">Belongs to the anhydro-N-acetylmuramic acid kinase family.</text>
</comment>
<protein>
    <recommendedName>
        <fullName evidence="1">Anhydro-N-acetylmuramic acid kinase</fullName>
        <ecNumber evidence="1">2.7.1.170</ecNumber>
    </recommendedName>
    <alternativeName>
        <fullName evidence="1">AnhMurNAc kinase</fullName>
    </alternativeName>
</protein>
<dbReference type="EC" id="2.7.1.170" evidence="1"/>
<dbReference type="EMBL" id="CP000036">
    <property type="protein sequence ID" value="ABB66111.1"/>
    <property type="molecule type" value="Genomic_DNA"/>
</dbReference>
<dbReference type="RefSeq" id="WP_000835054.1">
    <property type="nucleotide sequence ID" value="NC_007613.1"/>
</dbReference>
<dbReference type="SMR" id="Q320Z7"/>
<dbReference type="KEGG" id="sbo:SBO_1494"/>
<dbReference type="HOGENOM" id="CLU_038782_0_0_6"/>
<dbReference type="UniPathway" id="UPA00343"/>
<dbReference type="UniPathway" id="UPA00544"/>
<dbReference type="Proteomes" id="UP000007067">
    <property type="component" value="Chromosome"/>
</dbReference>
<dbReference type="GO" id="GO:0005524">
    <property type="term" value="F:ATP binding"/>
    <property type="evidence" value="ECO:0007669"/>
    <property type="project" value="UniProtKB-UniRule"/>
</dbReference>
<dbReference type="GO" id="GO:0016301">
    <property type="term" value="F:kinase activity"/>
    <property type="evidence" value="ECO:0007669"/>
    <property type="project" value="UniProtKB-KW"/>
</dbReference>
<dbReference type="GO" id="GO:0016773">
    <property type="term" value="F:phosphotransferase activity, alcohol group as acceptor"/>
    <property type="evidence" value="ECO:0007669"/>
    <property type="project" value="UniProtKB-UniRule"/>
</dbReference>
<dbReference type="GO" id="GO:0097175">
    <property type="term" value="P:1,6-anhydro-N-acetyl-beta-muramic acid catabolic process"/>
    <property type="evidence" value="ECO:0007669"/>
    <property type="project" value="UniProtKB-UniRule"/>
</dbReference>
<dbReference type="GO" id="GO:0006040">
    <property type="term" value="P:amino sugar metabolic process"/>
    <property type="evidence" value="ECO:0007669"/>
    <property type="project" value="InterPro"/>
</dbReference>
<dbReference type="GO" id="GO:0009254">
    <property type="term" value="P:peptidoglycan turnover"/>
    <property type="evidence" value="ECO:0007669"/>
    <property type="project" value="UniProtKB-UniRule"/>
</dbReference>
<dbReference type="CDD" id="cd24050">
    <property type="entry name" value="ASKHA_NBD_ANMK"/>
    <property type="match status" value="1"/>
</dbReference>
<dbReference type="Gene3D" id="3.30.420.40">
    <property type="match status" value="2"/>
</dbReference>
<dbReference type="HAMAP" id="MF_01270">
    <property type="entry name" value="AnhMurNAc_kinase"/>
    <property type="match status" value="1"/>
</dbReference>
<dbReference type="InterPro" id="IPR005338">
    <property type="entry name" value="Anhydro_N_Ac-Mur_kinase"/>
</dbReference>
<dbReference type="InterPro" id="IPR043129">
    <property type="entry name" value="ATPase_NBD"/>
</dbReference>
<dbReference type="NCBIfam" id="NF007138">
    <property type="entry name" value="PRK09585.1-1"/>
    <property type="match status" value="1"/>
</dbReference>
<dbReference type="NCBIfam" id="NF007139">
    <property type="entry name" value="PRK09585.1-3"/>
    <property type="match status" value="1"/>
</dbReference>
<dbReference type="NCBIfam" id="NF007148">
    <property type="entry name" value="PRK09585.3-2"/>
    <property type="match status" value="1"/>
</dbReference>
<dbReference type="PANTHER" id="PTHR30605">
    <property type="entry name" value="ANHYDRO-N-ACETYLMURAMIC ACID KINASE"/>
    <property type="match status" value="1"/>
</dbReference>
<dbReference type="PANTHER" id="PTHR30605:SF0">
    <property type="entry name" value="ANHYDRO-N-ACETYLMURAMIC ACID KINASE"/>
    <property type="match status" value="1"/>
</dbReference>
<dbReference type="Pfam" id="PF03702">
    <property type="entry name" value="AnmK"/>
    <property type="match status" value="1"/>
</dbReference>
<dbReference type="SUPFAM" id="SSF53067">
    <property type="entry name" value="Actin-like ATPase domain"/>
    <property type="match status" value="1"/>
</dbReference>
<feature type="chain" id="PRO_0000250058" description="Anhydro-N-acetylmuramic acid kinase">
    <location>
        <begin position="1"/>
        <end position="369"/>
    </location>
</feature>
<feature type="binding site" evidence="1">
    <location>
        <begin position="12"/>
        <end position="19"/>
    </location>
    <ligand>
        <name>ATP</name>
        <dbReference type="ChEBI" id="CHEBI:30616"/>
    </ligand>
</feature>
<keyword id="KW-0067">ATP-binding</keyword>
<keyword id="KW-0119">Carbohydrate metabolism</keyword>
<keyword id="KW-0418">Kinase</keyword>
<keyword id="KW-0547">Nucleotide-binding</keyword>
<keyword id="KW-0808">Transferase</keyword>